<gene>
    <name evidence="1" type="primary">tpm</name>
    <name type="ordered locus">LPC_3119</name>
</gene>
<accession>A5II06</accession>
<feature type="chain" id="PRO_1000047205" description="Thiopurine S-methyltransferase">
    <location>
        <begin position="1"/>
        <end position="221"/>
    </location>
</feature>
<feature type="binding site" evidence="1">
    <location>
        <position position="12"/>
    </location>
    <ligand>
        <name>S-adenosyl-L-methionine</name>
        <dbReference type="ChEBI" id="CHEBI:59789"/>
    </ligand>
</feature>
<feature type="binding site" evidence="1">
    <location>
        <position position="47"/>
    </location>
    <ligand>
        <name>S-adenosyl-L-methionine</name>
        <dbReference type="ChEBI" id="CHEBI:59789"/>
    </ligand>
</feature>
<feature type="binding site" evidence="1">
    <location>
        <position position="68"/>
    </location>
    <ligand>
        <name>S-adenosyl-L-methionine</name>
        <dbReference type="ChEBI" id="CHEBI:59789"/>
    </ligand>
</feature>
<feature type="binding site" evidence="1">
    <location>
        <position position="125"/>
    </location>
    <ligand>
        <name>S-adenosyl-L-methionine</name>
        <dbReference type="ChEBI" id="CHEBI:59789"/>
    </ligand>
</feature>
<sequence length="221" mass="25294">MNKGQYFWNELWCEGRISFHKEEVNPDLIAYVSSLNTPAKGRILVPLCGKSVDMLWLVRQGYHVVGIELVEKAILQFVQEHQITVRENTIGQAKQYFTDNLNLWVTDIFALNSALIEPVDAIYDRAALVALPKKLRPAYVDICLKWLKPGGSILLKTLQYNQEKVQGPPYSVSSEEIALSYQQCAKIELLKSQKRIQEPNDHLFNLGISEVNDYVWCIRKG</sequence>
<reference key="1">
    <citation type="submission" date="2006-11" db="EMBL/GenBank/DDBJ databases">
        <title>Identification and characterization of a new conjugation/ type IVA secretion system (trb/tra) of L. pneumophila Corby localized on a mobile genomic island.</title>
        <authorList>
            <person name="Gloeckner G."/>
            <person name="Albert-Weissenberger C."/>
            <person name="Weinmann E."/>
            <person name="Jacobi S."/>
            <person name="Schunder E."/>
            <person name="Steinert M."/>
            <person name="Buchrieser C."/>
            <person name="Hacker J."/>
            <person name="Heuner K."/>
        </authorList>
    </citation>
    <scope>NUCLEOTIDE SEQUENCE [LARGE SCALE GENOMIC DNA]</scope>
    <source>
        <strain>Corby</strain>
    </source>
</reference>
<proteinExistence type="inferred from homology"/>
<organism>
    <name type="scientific">Legionella pneumophila (strain Corby)</name>
    <dbReference type="NCBI Taxonomy" id="400673"/>
    <lineage>
        <taxon>Bacteria</taxon>
        <taxon>Pseudomonadati</taxon>
        <taxon>Pseudomonadota</taxon>
        <taxon>Gammaproteobacteria</taxon>
        <taxon>Legionellales</taxon>
        <taxon>Legionellaceae</taxon>
        <taxon>Legionella</taxon>
    </lineage>
</organism>
<dbReference type="EC" id="2.1.1.67" evidence="1"/>
<dbReference type="EMBL" id="CP000675">
    <property type="protein sequence ID" value="ABQ57006.1"/>
    <property type="molecule type" value="Genomic_DNA"/>
</dbReference>
<dbReference type="RefSeq" id="WP_011947716.1">
    <property type="nucleotide sequence ID" value="NZ_JAPMSS010000004.1"/>
</dbReference>
<dbReference type="SMR" id="A5II06"/>
<dbReference type="KEGG" id="lpc:LPC_3119"/>
<dbReference type="HOGENOM" id="CLU_085515_1_0_6"/>
<dbReference type="GO" id="GO:0005737">
    <property type="term" value="C:cytoplasm"/>
    <property type="evidence" value="ECO:0007669"/>
    <property type="project" value="UniProtKB-SubCell"/>
</dbReference>
<dbReference type="GO" id="GO:0008119">
    <property type="term" value="F:thiopurine S-methyltransferase activity"/>
    <property type="evidence" value="ECO:0007669"/>
    <property type="project" value="UniProtKB-UniRule"/>
</dbReference>
<dbReference type="GO" id="GO:0032259">
    <property type="term" value="P:methylation"/>
    <property type="evidence" value="ECO:0007669"/>
    <property type="project" value="UniProtKB-KW"/>
</dbReference>
<dbReference type="GO" id="GO:0010038">
    <property type="term" value="P:response to metal ion"/>
    <property type="evidence" value="ECO:0007669"/>
    <property type="project" value="InterPro"/>
</dbReference>
<dbReference type="CDD" id="cd02440">
    <property type="entry name" value="AdoMet_MTases"/>
    <property type="match status" value="1"/>
</dbReference>
<dbReference type="FunFam" id="3.40.50.150:FF:000101">
    <property type="entry name" value="Thiopurine S-methyltransferase"/>
    <property type="match status" value="1"/>
</dbReference>
<dbReference type="Gene3D" id="3.40.50.150">
    <property type="entry name" value="Vaccinia Virus protein VP39"/>
    <property type="match status" value="1"/>
</dbReference>
<dbReference type="HAMAP" id="MF_00812">
    <property type="entry name" value="Thiopur_methtran"/>
    <property type="match status" value="1"/>
</dbReference>
<dbReference type="InterPro" id="IPR029063">
    <property type="entry name" value="SAM-dependent_MTases_sf"/>
</dbReference>
<dbReference type="InterPro" id="IPR022474">
    <property type="entry name" value="Thiopur_S-MeTfrase_Se/Te_detox"/>
</dbReference>
<dbReference type="InterPro" id="IPR025835">
    <property type="entry name" value="Thiopurine_S-MeTrfase"/>
</dbReference>
<dbReference type="InterPro" id="IPR008854">
    <property type="entry name" value="TPMT"/>
</dbReference>
<dbReference type="NCBIfam" id="NF009732">
    <property type="entry name" value="PRK13255.1"/>
    <property type="match status" value="1"/>
</dbReference>
<dbReference type="NCBIfam" id="TIGR03840">
    <property type="entry name" value="TMPT_Se_Te"/>
    <property type="match status" value="1"/>
</dbReference>
<dbReference type="PANTHER" id="PTHR10259">
    <property type="entry name" value="THIOPURINE S-METHYLTRANSFERASE"/>
    <property type="match status" value="1"/>
</dbReference>
<dbReference type="PANTHER" id="PTHR10259:SF11">
    <property type="entry name" value="THIOPURINE S-METHYLTRANSFERASE"/>
    <property type="match status" value="1"/>
</dbReference>
<dbReference type="Pfam" id="PF05724">
    <property type="entry name" value="TPMT"/>
    <property type="match status" value="1"/>
</dbReference>
<dbReference type="PIRSF" id="PIRSF023956">
    <property type="entry name" value="Thiopurine_S-methyltransferase"/>
    <property type="match status" value="1"/>
</dbReference>
<dbReference type="SUPFAM" id="SSF53335">
    <property type="entry name" value="S-adenosyl-L-methionine-dependent methyltransferases"/>
    <property type="match status" value="1"/>
</dbReference>
<dbReference type="PROSITE" id="PS51585">
    <property type="entry name" value="SAM_MT_TPMT"/>
    <property type="match status" value="1"/>
</dbReference>
<evidence type="ECO:0000255" key="1">
    <source>
        <dbReference type="HAMAP-Rule" id="MF_00812"/>
    </source>
</evidence>
<name>TPMT_LEGPC</name>
<keyword id="KW-0963">Cytoplasm</keyword>
<keyword id="KW-0489">Methyltransferase</keyword>
<keyword id="KW-0949">S-adenosyl-L-methionine</keyword>
<keyword id="KW-0808">Transferase</keyword>
<comment type="catalytic activity">
    <reaction evidence="1">
        <text>S-adenosyl-L-methionine + a thiopurine = S-adenosyl-L-homocysteine + a thiopurine S-methylether.</text>
        <dbReference type="EC" id="2.1.1.67"/>
    </reaction>
</comment>
<comment type="subcellular location">
    <subcellularLocation>
        <location evidence="1">Cytoplasm</location>
    </subcellularLocation>
</comment>
<comment type="similarity">
    <text evidence="1">Belongs to the class I-like SAM-binding methyltransferase superfamily. TPMT family.</text>
</comment>
<protein>
    <recommendedName>
        <fullName evidence="1">Thiopurine S-methyltransferase</fullName>
        <ecNumber evidence="1">2.1.1.67</ecNumber>
    </recommendedName>
    <alternativeName>
        <fullName evidence="1">Thiopurine methyltransferase</fullName>
    </alternativeName>
</protein>